<gene>
    <name type="primary">RRI1</name>
    <name type="synonym">CSN5</name>
    <name type="ordered locus">CAGL0G05676g</name>
</gene>
<accession>Q6FT36</accession>
<proteinExistence type="inferred from homology"/>
<dbReference type="EC" id="3.4.-.-"/>
<dbReference type="EMBL" id="CR380953">
    <property type="protein sequence ID" value="CAG59535.1"/>
    <property type="molecule type" value="Genomic_DNA"/>
</dbReference>
<dbReference type="RefSeq" id="XP_446608.1">
    <property type="nucleotide sequence ID" value="XM_446608.1"/>
</dbReference>
<dbReference type="FunCoup" id="Q6FT36">
    <property type="interactions" value="65"/>
</dbReference>
<dbReference type="STRING" id="284593.Q6FT36"/>
<dbReference type="EnsemblFungi" id="CAGL0G05676g-T">
    <property type="protein sequence ID" value="CAGL0G05676g-T-p1"/>
    <property type="gene ID" value="CAGL0G05676g"/>
</dbReference>
<dbReference type="KEGG" id="cgr:2888409"/>
<dbReference type="CGD" id="CAL0130031">
    <property type="gene designation" value="CAGL0G05676g"/>
</dbReference>
<dbReference type="VEuPathDB" id="FungiDB:CAGL0G05676g"/>
<dbReference type="eggNOG" id="KOG1554">
    <property type="taxonomic scope" value="Eukaryota"/>
</dbReference>
<dbReference type="HOGENOM" id="CLU_031199_1_0_1"/>
<dbReference type="InParanoid" id="Q6FT36"/>
<dbReference type="Proteomes" id="UP000002428">
    <property type="component" value="Chromosome G"/>
</dbReference>
<dbReference type="GO" id="GO:0008180">
    <property type="term" value="C:COP9 signalosome"/>
    <property type="evidence" value="ECO:0007669"/>
    <property type="project" value="UniProtKB-KW"/>
</dbReference>
<dbReference type="GO" id="GO:0005737">
    <property type="term" value="C:cytoplasm"/>
    <property type="evidence" value="ECO:0007669"/>
    <property type="project" value="UniProtKB-SubCell"/>
</dbReference>
<dbReference type="GO" id="GO:0046872">
    <property type="term" value="F:metal ion binding"/>
    <property type="evidence" value="ECO:0007669"/>
    <property type="project" value="UniProtKB-KW"/>
</dbReference>
<dbReference type="GO" id="GO:0004222">
    <property type="term" value="F:metalloendopeptidase activity"/>
    <property type="evidence" value="ECO:0007669"/>
    <property type="project" value="EnsemblFungi"/>
</dbReference>
<dbReference type="GO" id="GO:0071444">
    <property type="term" value="P:cellular response to pheromone"/>
    <property type="evidence" value="ECO:0007669"/>
    <property type="project" value="EnsemblFungi"/>
</dbReference>
<dbReference type="GO" id="GO:0000747">
    <property type="term" value="P:conjugation with cellular fusion"/>
    <property type="evidence" value="ECO:0007669"/>
    <property type="project" value="EnsemblFungi"/>
</dbReference>
<dbReference type="GO" id="GO:0070452">
    <property type="term" value="P:positive regulation of ergosterol biosynthetic process"/>
    <property type="evidence" value="ECO:0007669"/>
    <property type="project" value="EnsemblFungi"/>
</dbReference>
<dbReference type="GO" id="GO:0000338">
    <property type="term" value="P:protein deneddylation"/>
    <property type="evidence" value="ECO:0007669"/>
    <property type="project" value="EnsemblFungi"/>
</dbReference>
<dbReference type="GO" id="GO:0006508">
    <property type="term" value="P:proteolysis"/>
    <property type="evidence" value="ECO:0007669"/>
    <property type="project" value="UniProtKB-KW"/>
</dbReference>
<dbReference type="CDD" id="cd08069">
    <property type="entry name" value="MPN_RPN11_CSN5"/>
    <property type="match status" value="1"/>
</dbReference>
<dbReference type="FunFam" id="3.40.140.10:FF:000203">
    <property type="entry name" value="COP9 signalosome complex subunit 5"/>
    <property type="match status" value="1"/>
</dbReference>
<dbReference type="Gene3D" id="3.40.140.10">
    <property type="entry name" value="Cytidine Deaminase, domain 2"/>
    <property type="match status" value="1"/>
</dbReference>
<dbReference type="InterPro" id="IPR000555">
    <property type="entry name" value="JAMM/MPN+_dom"/>
</dbReference>
<dbReference type="InterPro" id="IPR050242">
    <property type="entry name" value="JAMM_MPN+_peptidase_M67A"/>
</dbReference>
<dbReference type="InterPro" id="IPR037518">
    <property type="entry name" value="MPN"/>
</dbReference>
<dbReference type="PANTHER" id="PTHR10410">
    <property type="entry name" value="EUKARYOTIC TRANSLATION INITIATION FACTOR 3 -RELATED"/>
    <property type="match status" value="1"/>
</dbReference>
<dbReference type="Pfam" id="PF01398">
    <property type="entry name" value="JAB"/>
    <property type="match status" value="1"/>
</dbReference>
<dbReference type="SMART" id="SM00232">
    <property type="entry name" value="JAB_MPN"/>
    <property type="match status" value="1"/>
</dbReference>
<dbReference type="SUPFAM" id="SSF102712">
    <property type="entry name" value="JAB1/MPN domain"/>
    <property type="match status" value="1"/>
</dbReference>
<dbReference type="PROSITE" id="PS50249">
    <property type="entry name" value="MPN"/>
    <property type="match status" value="1"/>
</dbReference>
<comment type="function">
    <text evidence="1">Catalytic Component of the COP9 signalosome (CSN) complex that acts as an regulator of the ubiquitin (Ubl) conjugation pathway by mediating the deneddylation of the cullin subunit of SCF-type E3 ubiquitin-protein ligase complexes.</text>
</comment>
<comment type="subunit">
    <text evidence="1">Component of the COP9 signalosome (CSN) complex.</text>
</comment>
<comment type="subcellular location">
    <subcellularLocation>
        <location evidence="1">Cytoplasm</location>
    </subcellularLocation>
    <subcellularLocation>
        <location evidence="1">Nucleus</location>
    </subcellularLocation>
</comment>
<comment type="domain">
    <text evidence="1">The JAMM motif is essential for the protease activity of the CSN complex resulting in deneddylation of cullins. It constitutes the catalytic center of the complex (By similarity).</text>
</comment>
<comment type="similarity">
    <text evidence="4">Belongs to the peptidase M67A family. CSN5 subfamily.</text>
</comment>
<organism>
    <name type="scientific">Candida glabrata (strain ATCC 2001 / BCRC 20586 / JCM 3761 / NBRC 0622 / NRRL Y-65 / CBS 138)</name>
    <name type="common">Yeast</name>
    <name type="synonym">Nakaseomyces glabratus</name>
    <dbReference type="NCBI Taxonomy" id="284593"/>
    <lineage>
        <taxon>Eukaryota</taxon>
        <taxon>Fungi</taxon>
        <taxon>Dikarya</taxon>
        <taxon>Ascomycota</taxon>
        <taxon>Saccharomycotina</taxon>
        <taxon>Saccharomycetes</taxon>
        <taxon>Saccharomycetales</taxon>
        <taxon>Saccharomycetaceae</taxon>
        <taxon>Nakaseomyces</taxon>
    </lineage>
</organism>
<name>CSN5_CANGA</name>
<reference key="1">
    <citation type="journal article" date="2004" name="Nature">
        <title>Genome evolution in yeasts.</title>
        <authorList>
            <person name="Dujon B."/>
            <person name="Sherman D."/>
            <person name="Fischer G."/>
            <person name="Durrens P."/>
            <person name="Casaregola S."/>
            <person name="Lafontaine I."/>
            <person name="de Montigny J."/>
            <person name="Marck C."/>
            <person name="Neuveglise C."/>
            <person name="Talla E."/>
            <person name="Goffard N."/>
            <person name="Frangeul L."/>
            <person name="Aigle M."/>
            <person name="Anthouard V."/>
            <person name="Babour A."/>
            <person name="Barbe V."/>
            <person name="Barnay S."/>
            <person name="Blanchin S."/>
            <person name="Beckerich J.-M."/>
            <person name="Beyne E."/>
            <person name="Bleykasten C."/>
            <person name="Boisrame A."/>
            <person name="Boyer J."/>
            <person name="Cattolico L."/>
            <person name="Confanioleri F."/>
            <person name="de Daruvar A."/>
            <person name="Despons L."/>
            <person name="Fabre E."/>
            <person name="Fairhead C."/>
            <person name="Ferry-Dumazet H."/>
            <person name="Groppi A."/>
            <person name="Hantraye F."/>
            <person name="Hennequin C."/>
            <person name="Jauniaux N."/>
            <person name="Joyet P."/>
            <person name="Kachouri R."/>
            <person name="Kerrest A."/>
            <person name="Koszul R."/>
            <person name="Lemaire M."/>
            <person name="Lesur I."/>
            <person name="Ma L."/>
            <person name="Muller H."/>
            <person name="Nicaud J.-M."/>
            <person name="Nikolski M."/>
            <person name="Oztas S."/>
            <person name="Ozier-Kalogeropoulos O."/>
            <person name="Pellenz S."/>
            <person name="Potier S."/>
            <person name="Richard G.-F."/>
            <person name="Straub M.-L."/>
            <person name="Suleau A."/>
            <person name="Swennen D."/>
            <person name="Tekaia F."/>
            <person name="Wesolowski-Louvel M."/>
            <person name="Westhof E."/>
            <person name="Wirth B."/>
            <person name="Zeniou-Meyer M."/>
            <person name="Zivanovic Y."/>
            <person name="Bolotin-Fukuhara M."/>
            <person name="Thierry A."/>
            <person name="Bouchier C."/>
            <person name="Caudron B."/>
            <person name="Scarpelli C."/>
            <person name="Gaillardin C."/>
            <person name="Weissenbach J."/>
            <person name="Wincker P."/>
            <person name="Souciet J.-L."/>
        </authorList>
    </citation>
    <scope>NUCLEOTIDE SEQUENCE [LARGE SCALE GENOMIC DNA]</scope>
    <source>
        <strain>ATCC 2001 / BCRC 20586 / JCM 3761 / NBRC 0622 / NRRL Y-65 / CBS 138</strain>
    </source>
</reference>
<feature type="chain" id="PRO_0000194849" description="COP9 signalosome complex subunit 5">
    <location>
        <begin position="1"/>
        <end position="465"/>
    </location>
</feature>
<feature type="domain" description="MPN" evidence="2">
    <location>
        <begin position="74"/>
        <end position="216"/>
    </location>
</feature>
<feature type="region of interest" description="Disordered" evidence="3">
    <location>
        <begin position="364"/>
        <end position="386"/>
    </location>
</feature>
<feature type="short sequence motif" description="JAMM motif" evidence="2">
    <location>
        <begin position="162"/>
        <end position="175"/>
    </location>
</feature>
<feature type="binding site" evidence="2">
    <location>
        <position position="162"/>
    </location>
    <ligand>
        <name>Zn(2+)</name>
        <dbReference type="ChEBI" id="CHEBI:29105"/>
        <note>catalytic</note>
    </ligand>
</feature>
<feature type="binding site" evidence="2">
    <location>
        <position position="164"/>
    </location>
    <ligand>
        <name>Zn(2+)</name>
        <dbReference type="ChEBI" id="CHEBI:29105"/>
        <note>catalytic</note>
    </ligand>
</feature>
<feature type="binding site" evidence="2">
    <location>
        <position position="175"/>
    </location>
    <ligand>
        <name>Zn(2+)</name>
        <dbReference type="ChEBI" id="CHEBI:29105"/>
        <note>catalytic</note>
    </ligand>
</feature>
<keyword id="KW-0963">Cytoplasm</keyword>
<keyword id="KW-0378">Hydrolase</keyword>
<keyword id="KW-0479">Metal-binding</keyword>
<keyword id="KW-0482">Metalloprotease</keyword>
<keyword id="KW-0539">Nucleus</keyword>
<keyword id="KW-0645">Protease</keyword>
<keyword id="KW-1185">Reference proteome</keyword>
<keyword id="KW-0736">Signalosome</keyword>
<keyword id="KW-0862">Zinc</keyword>
<sequence>MDDFPSLNVSDLESKLLDYNIRDYEVQNSKHKNNIAGNEKESIDQLSLLNQVCSLKNRKAIDSTKNSPLFYQNVLLSKLACSKILCHATKGGNIEVMGMLLGNVIGNTFVIFDCFELPVEGTETMVNAHMESYEYMVQFYHEMVERSYTRNEENLNIIGWYHSHPGYDCWLSNIDMQTQSLNQQHQDPYLAIVVDPHKSKNDQKVRIGSFRTYQDQNDDTNFYELNTTVFDSELNKLENPLSVKIPFNSIESRNLESNYLQKLSETVKQWRNFKIMEKIENTAHTEDTTTNKSISTPGRIIQTAHEFAFAATSNGNGSRVNIMRSNSVSSIGSSSDIEMEDRNCSAFDSVASSINTIADPSRTSSIHTQMNNQNNQQERNSPKRPHILPAIQSSRYGVIFEGKDRPENKNFNIRTASAQDAFESKCIDDFHESLKNDYLTQKEILLRLKLRQYYRLRMYRDMFSK</sequence>
<evidence type="ECO:0000250" key="1"/>
<evidence type="ECO:0000255" key="2">
    <source>
        <dbReference type="PROSITE-ProRule" id="PRU01182"/>
    </source>
</evidence>
<evidence type="ECO:0000256" key="3">
    <source>
        <dbReference type="SAM" id="MobiDB-lite"/>
    </source>
</evidence>
<evidence type="ECO:0000305" key="4"/>
<protein>
    <recommendedName>
        <fullName>COP9 signalosome complex subunit 5</fullName>
        <ecNumber>3.4.-.-</ecNumber>
    </recommendedName>
</protein>